<evidence type="ECO:0000250" key="1"/>
<evidence type="ECO:0000250" key="2">
    <source>
        <dbReference type="UniProtKB" id="O80397"/>
    </source>
</evidence>
<evidence type="ECO:0000255" key="3">
    <source>
        <dbReference type="PROSITE-ProRule" id="PRU00159"/>
    </source>
</evidence>
<evidence type="ECO:0000255" key="4">
    <source>
        <dbReference type="PROSITE-ProRule" id="PRU10027"/>
    </source>
</evidence>
<evidence type="ECO:0000256" key="5">
    <source>
        <dbReference type="SAM" id="MobiDB-lite"/>
    </source>
</evidence>
<evidence type="ECO:0000269" key="6">
    <source>
    </source>
</evidence>
<evidence type="ECO:0000269" key="7">
    <source>
    </source>
</evidence>
<evidence type="ECO:0000269" key="8">
    <source>
    </source>
</evidence>
<evidence type="ECO:0000269" key="9">
    <source>
    </source>
</evidence>
<evidence type="ECO:0000269" key="10">
    <source>
    </source>
</evidence>
<evidence type="ECO:0000269" key="11">
    <source>
    </source>
</evidence>
<evidence type="ECO:0000269" key="12">
    <source>
    </source>
</evidence>
<evidence type="ECO:0000269" key="13">
    <source>
    </source>
</evidence>
<evidence type="ECO:0000269" key="14">
    <source>
    </source>
</evidence>
<evidence type="ECO:0000269" key="15">
    <source>
    </source>
</evidence>
<evidence type="ECO:0000269" key="16">
    <source>
    </source>
</evidence>
<evidence type="ECO:0000269" key="17">
    <source>
    </source>
</evidence>
<evidence type="ECO:0000269" key="18">
    <source>
    </source>
</evidence>
<evidence type="ECO:0000269" key="19">
    <source>
    </source>
</evidence>
<evidence type="ECO:0000269" key="20">
    <source>
    </source>
</evidence>
<evidence type="ECO:0000269" key="21">
    <source>
    </source>
</evidence>
<evidence type="ECO:0000269" key="22">
    <source ref="2"/>
</evidence>
<evidence type="ECO:0000303" key="23">
    <source>
    </source>
</evidence>
<evidence type="ECO:0000303" key="24">
    <source>
    </source>
</evidence>
<evidence type="ECO:0000303" key="25">
    <source ref="2"/>
</evidence>
<evidence type="ECO:0000305" key="26"/>
<evidence type="ECO:0000312" key="27">
    <source>
        <dbReference type="Araport" id="AT3G21220"/>
    </source>
</evidence>
<evidence type="ECO:0000312" key="28">
    <source>
        <dbReference type="EMBL" id="BAB01714.1"/>
    </source>
</evidence>
<evidence type="ECO:0007829" key="29">
    <source>
        <dbReference type="PDB" id="7XBR"/>
    </source>
</evidence>
<comment type="function">
    <text evidence="7 8 9 10 11 13 14 15 16 17 21">Mitogen-activated protein kinase kinase (MAPKK) which regulates abscisic acid (ABA) responses in a MAPKKK20-MKK5-MPK6 cascade involved in root growth (e.g. root cell division and elongation) and stomatal response, probably via MAPK6 activation by protein phosphorylation (PubMed:27913741). Involved in the second phase of hydrogen peroxide generation during hypersensitive response-like cell death. Involved in the innate immune MAP kinase signaling cascade (MEKK1, MKK4/MKK5 and MPK3/MPK6) downstream of bacterial flagellin receptor FLS2. Activates by phosphorylation the downstream MPK3 and MPK6. YDA-MKK4/MKK5-MPK3/MPK6 module regulates stomatal cell fate before the guard mother cell (GMC) is specified. This MAPK cascade also functions downstream of the ER receptor in regulating coordinated local cell proliferation, which shapes the morphology of plant organs. MKK4 and MKK5 participate in the regulation of floral organ abscission. Target of the Pseudomonas syringae type III effector HopF2, that inhibits the activation of the downstream MPK6 and PAMP-triggered immunity. Plays a critical role in high light stress tolerance by the mediation of the Cu/Zn SODs CSD1 and CSD2 gene expression. Phosphorylates BZR1 in vitro.</text>
</comment>
<comment type="catalytic activity">
    <reaction evidence="8">
        <text>L-seryl-[protein] + ATP = O-phospho-L-seryl-[protein] + ADP + H(+)</text>
        <dbReference type="Rhea" id="RHEA:17989"/>
        <dbReference type="Rhea" id="RHEA-COMP:9863"/>
        <dbReference type="Rhea" id="RHEA-COMP:11604"/>
        <dbReference type="ChEBI" id="CHEBI:15378"/>
        <dbReference type="ChEBI" id="CHEBI:29999"/>
        <dbReference type="ChEBI" id="CHEBI:30616"/>
        <dbReference type="ChEBI" id="CHEBI:83421"/>
        <dbReference type="ChEBI" id="CHEBI:456216"/>
        <dbReference type="EC" id="2.7.12.2"/>
    </reaction>
</comment>
<comment type="catalytic activity">
    <reaction evidence="8">
        <text>L-threonyl-[protein] + ATP = O-phospho-L-threonyl-[protein] + ADP + H(+)</text>
        <dbReference type="Rhea" id="RHEA:46608"/>
        <dbReference type="Rhea" id="RHEA-COMP:11060"/>
        <dbReference type="Rhea" id="RHEA-COMP:11605"/>
        <dbReference type="ChEBI" id="CHEBI:15378"/>
        <dbReference type="ChEBI" id="CHEBI:30013"/>
        <dbReference type="ChEBI" id="CHEBI:30616"/>
        <dbReference type="ChEBI" id="CHEBI:61977"/>
        <dbReference type="ChEBI" id="CHEBI:456216"/>
        <dbReference type="EC" id="2.7.12.2"/>
    </reaction>
</comment>
<comment type="catalytic activity">
    <reaction evidence="8">
        <text>L-tyrosyl-[protein] + ATP = O-phospho-L-tyrosyl-[protein] + ADP + H(+)</text>
        <dbReference type="Rhea" id="RHEA:10596"/>
        <dbReference type="Rhea" id="RHEA-COMP:10136"/>
        <dbReference type="Rhea" id="RHEA-COMP:20101"/>
        <dbReference type="ChEBI" id="CHEBI:15378"/>
        <dbReference type="ChEBI" id="CHEBI:30616"/>
        <dbReference type="ChEBI" id="CHEBI:46858"/>
        <dbReference type="ChEBI" id="CHEBI:61978"/>
        <dbReference type="ChEBI" id="CHEBI:456216"/>
        <dbReference type="EC" id="2.7.12.2"/>
    </reaction>
</comment>
<comment type="activity regulation">
    <text evidence="8 13 15 16">Activated through serine and threonine phosphorylation by MEKK1 and MAPKKK20 in response to abscisic acid (ABA). Inhibited through phosphorylation by GSK3/Shaggy-like kinase ASKs. Inhibited through ADP-Ribosylation by P.syringae HopF2. Activated after high light stress.</text>
</comment>
<comment type="subunit">
    <text evidence="12 13 17 18 19 20 21">Interacts with P.syringae type III effector HopF2 (PubMed:20571112). Interacts with BZR1 (PubMed:24019147). Interacts with MPK6 and MPK3 (PubMed:19513235, PubMed:27913741). Interacts with RACK1A, RACK1B and RACK1C (PubMed:25731164). Interacts with MAPKKK5 mainly in the cytosol (PubMed:27679653). Binds to BASL (PubMed:25843888). Interacts with MAPKKK20 (PubMed:27913741).</text>
</comment>
<comment type="interaction">
    <interactant intactId="EBI-2358458">
        <id>Q8RXG3</id>
    </interactant>
    <interactant intactId="EBI-349548">
        <id>Q39026</id>
        <label>MPK6</label>
    </interactant>
    <organismsDiffer>false</organismsDiffer>
    <experiments>4</experiments>
</comment>
<comment type="tissue specificity">
    <text evidence="6 22">Expressed higher in stems and leaves than in flowers and roots.</text>
</comment>
<comment type="PTM">
    <text evidence="8 20 21">Phosphorylation at Thr-215 and Ser-221 by MAP kinase kinase kinases positively regulates kinase activity (PubMed:11875555). Phosphorylated by MAPKKK5 and MAPKKK20 in response to abscisic acid (ABA) (PubMed:27679653, PubMed:27913741).</text>
</comment>
<comment type="PTM">
    <text evidence="8">ADP-ribosylation at Arg-313 by P.syringae type III effector HopF2 reduces the ability of the protein to phosphorylate downstream MPK6.</text>
</comment>
<comment type="disruption phenotype">
    <text evidence="11 16 21">RNAi double mutants MKK4 and MKK5 have a strong abscission defect. RNAi mutant MKK5 shows super-sensitivity to high light stress. Insensitivity to abscisic acid (ABA) in terms of root growth inhibition (e.g. root cell division and elongation) and stomatal response leading to increased water loss under dehydrated conditions (PubMed:27913741). Impaired ABA-mediated increased activity of MPK6 (PubMed:27913741).</text>
</comment>
<comment type="similarity">
    <text evidence="26">Belongs to the protein kinase superfamily. STE Ser/Thr protein kinase family. MAP kinase kinase subfamily.</text>
</comment>
<comment type="sequence caution" evidence="26">
    <conflict type="frameshift">
        <sequence resource="EMBL-CDS" id="AAL91161"/>
    </conflict>
</comment>
<comment type="sequence caution" evidence="26">
    <conflict type="erroneous initiation">
        <sequence resource="EMBL-CDS" id="AAM47877"/>
    </conflict>
    <text>Truncated N-terminus.</text>
</comment>
<keyword id="KW-0002">3D-structure</keyword>
<keyword id="KW-0938">Abscisic acid signaling pathway</keyword>
<keyword id="KW-0013">ADP-ribosylation</keyword>
<keyword id="KW-0067">ATP-binding</keyword>
<keyword id="KW-0381">Hypersensitive response</keyword>
<keyword id="KW-0418">Kinase</keyword>
<keyword id="KW-0547">Nucleotide-binding</keyword>
<keyword id="KW-0597">Phosphoprotein</keyword>
<keyword id="KW-0611">Plant defense</keyword>
<keyword id="KW-1185">Reference proteome</keyword>
<keyword id="KW-0723">Serine/threonine-protein kinase</keyword>
<keyword id="KW-0808">Transferase</keyword>
<gene>
    <name evidence="23" type="primary">MKK5</name>
    <name evidence="24" type="synonym">MEK5</name>
    <name evidence="27" type="ordered locus">At3g21220</name>
    <name evidence="28" type="ORF">MXL8.8</name>
</gene>
<sequence length="348" mass="38329">MKPIQSPSGVASPMKNRLRKRPDLSLPLPHRDVALAVPLPLPPPSSSSSAPASSSAISTNISAAKSLSELERVNRIGSGAGGTVYKVIHTPTSRPFALKVIYGNHEDTVRRQICREIEILRSVDHPNVVKCHDMFDHNGEIQVLLEFMDQGSLEGAHIWQEQELADLSRQILSGLAYLHRRHIVHRDIKPSNLLINSAKNVKIADFGVSRILAQTMDPCNSSVGTIAYMSPERINTDLNHGRYDGYAGDVWSLGVSILEFYLGRFPFAVSRQGDWASLMCAICMSQPPEAPATASQEFRHFVSCCLQSDPPKRWSAQQLLQHPFILKATGGPNLRQMLPPPRPLPSAS</sequence>
<dbReference type="EC" id="2.7.12.2" evidence="8"/>
<dbReference type="EMBL" id="AB015316">
    <property type="protein sequence ID" value="BAA28831.1"/>
    <property type="molecule type" value="mRNA"/>
</dbReference>
<dbReference type="EMBL" id="Y07694">
    <property type="protein sequence ID" value="CAA68958.1"/>
    <property type="molecule type" value="mRNA"/>
</dbReference>
<dbReference type="EMBL" id="AB023045">
    <property type="protein sequence ID" value="BAB01714.1"/>
    <property type="molecule type" value="Genomic_DNA"/>
</dbReference>
<dbReference type="EMBL" id="CP002686">
    <property type="protein sequence ID" value="AEE76478.1"/>
    <property type="molecule type" value="Genomic_DNA"/>
</dbReference>
<dbReference type="EMBL" id="CP002686">
    <property type="protein sequence ID" value="ANM64001.1"/>
    <property type="molecule type" value="Genomic_DNA"/>
</dbReference>
<dbReference type="EMBL" id="AY081272">
    <property type="protein sequence ID" value="AAL91161.1"/>
    <property type="status" value="ALT_FRAME"/>
    <property type="molecule type" value="mRNA"/>
</dbReference>
<dbReference type="EMBL" id="AY114558">
    <property type="protein sequence ID" value="AAM47877.1"/>
    <property type="status" value="ALT_INIT"/>
    <property type="molecule type" value="mRNA"/>
</dbReference>
<dbReference type="PIR" id="T51340">
    <property type="entry name" value="T51340"/>
</dbReference>
<dbReference type="PIR" id="T52635">
    <property type="entry name" value="T52635"/>
</dbReference>
<dbReference type="RefSeq" id="NP_001319606.1">
    <property type="nucleotide sequence ID" value="NM_001338511.1"/>
</dbReference>
<dbReference type="RefSeq" id="NP_188759.1">
    <property type="nucleotide sequence ID" value="NM_113017.4"/>
</dbReference>
<dbReference type="PDB" id="7XBR">
    <property type="method" value="X-ray"/>
    <property type="resolution" value="3.20 A"/>
    <property type="chains" value="A/B/C/D/E/F/G/H=62-335"/>
</dbReference>
<dbReference type="PDBsum" id="7XBR"/>
<dbReference type="SMR" id="Q8RXG3"/>
<dbReference type="BioGRID" id="7008">
    <property type="interactions" value="8"/>
</dbReference>
<dbReference type="FunCoup" id="Q8RXG3">
    <property type="interactions" value="1152"/>
</dbReference>
<dbReference type="IntAct" id="Q8RXG3">
    <property type="interactions" value="1"/>
</dbReference>
<dbReference type="STRING" id="3702.Q8RXG3"/>
<dbReference type="iPTMnet" id="Q8RXG3"/>
<dbReference type="PaxDb" id="3702-AT3G21220.1"/>
<dbReference type="ProteomicsDB" id="238789"/>
<dbReference type="EnsemblPlants" id="AT3G21220.1">
    <property type="protein sequence ID" value="AT3G21220.1"/>
    <property type="gene ID" value="AT3G21220"/>
</dbReference>
<dbReference type="EnsemblPlants" id="AT3G21220.2">
    <property type="protein sequence ID" value="AT3G21220.2"/>
    <property type="gene ID" value="AT3G21220"/>
</dbReference>
<dbReference type="GeneID" id="821676"/>
<dbReference type="Gramene" id="AT3G21220.1">
    <property type="protein sequence ID" value="AT3G21220.1"/>
    <property type="gene ID" value="AT3G21220"/>
</dbReference>
<dbReference type="Gramene" id="AT3G21220.2">
    <property type="protein sequence ID" value="AT3G21220.2"/>
    <property type="gene ID" value="AT3G21220"/>
</dbReference>
<dbReference type="KEGG" id="ath:AT3G21220"/>
<dbReference type="Araport" id="AT3G21220"/>
<dbReference type="TAIR" id="AT3G21220">
    <property type="gene designation" value="MKK5"/>
</dbReference>
<dbReference type="eggNOG" id="KOG0581">
    <property type="taxonomic scope" value="Eukaryota"/>
</dbReference>
<dbReference type="HOGENOM" id="CLU_000288_63_23_1"/>
<dbReference type="InParanoid" id="Q8RXG3"/>
<dbReference type="OMA" id="HAYKIGK"/>
<dbReference type="OrthoDB" id="8693905at2759"/>
<dbReference type="PhylomeDB" id="Q8RXG3"/>
<dbReference type="BRENDA" id="2.7.12.2">
    <property type="organism ID" value="399"/>
</dbReference>
<dbReference type="PRO" id="PR:Q8RXG3"/>
<dbReference type="Proteomes" id="UP000006548">
    <property type="component" value="Chromosome 3"/>
</dbReference>
<dbReference type="ExpressionAtlas" id="Q8RXG3">
    <property type="expression patterns" value="baseline and differential"/>
</dbReference>
<dbReference type="GO" id="GO:0005524">
    <property type="term" value="F:ATP binding"/>
    <property type="evidence" value="ECO:0007669"/>
    <property type="project" value="UniProtKB-KW"/>
</dbReference>
<dbReference type="GO" id="GO:0004708">
    <property type="term" value="F:MAP kinase kinase activity"/>
    <property type="evidence" value="ECO:0007669"/>
    <property type="project" value="UniProtKB-EC"/>
</dbReference>
<dbReference type="GO" id="GO:0106310">
    <property type="term" value="F:protein serine kinase activity"/>
    <property type="evidence" value="ECO:0007669"/>
    <property type="project" value="RHEA"/>
</dbReference>
<dbReference type="GO" id="GO:0004674">
    <property type="term" value="F:protein serine/threonine kinase activity"/>
    <property type="evidence" value="ECO:0007669"/>
    <property type="project" value="UniProtKB-KW"/>
</dbReference>
<dbReference type="GO" id="GO:0004713">
    <property type="term" value="F:protein tyrosine kinase activity"/>
    <property type="evidence" value="ECO:0007669"/>
    <property type="project" value="RHEA"/>
</dbReference>
<dbReference type="GO" id="GO:0009738">
    <property type="term" value="P:abscisic acid-activated signaling pathway"/>
    <property type="evidence" value="ECO:0000315"/>
    <property type="project" value="UniProtKB"/>
</dbReference>
<dbReference type="GO" id="GO:0051301">
    <property type="term" value="P:cell division"/>
    <property type="evidence" value="ECO:0000315"/>
    <property type="project" value="UniProtKB"/>
</dbReference>
<dbReference type="GO" id="GO:0098542">
    <property type="term" value="P:defense response to other organism"/>
    <property type="evidence" value="ECO:0000315"/>
    <property type="project" value="TAIR"/>
</dbReference>
<dbReference type="GO" id="GO:0010227">
    <property type="term" value="P:floral organ abscission"/>
    <property type="evidence" value="ECO:0000315"/>
    <property type="project" value="TAIR"/>
</dbReference>
<dbReference type="GO" id="GO:0010229">
    <property type="term" value="P:inflorescence development"/>
    <property type="evidence" value="ECO:0000316"/>
    <property type="project" value="TAIR"/>
</dbReference>
<dbReference type="GO" id="GO:0009626">
    <property type="term" value="P:plant-type hypersensitive response"/>
    <property type="evidence" value="ECO:0000315"/>
    <property type="project" value="UniProtKB"/>
</dbReference>
<dbReference type="GO" id="GO:0010365">
    <property type="term" value="P:positive regulation of ethylene biosynthetic process"/>
    <property type="evidence" value="ECO:0000315"/>
    <property type="project" value="UniProtKB"/>
</dbReference>
<dbReference type="GO" id="GO:0010082">
    <property type="term" value="P:regulation of root meristem growth"/>
    <property type="evidence" value="ECO:0000315"/>
    <property type="project" value="UniProtKB"/>
</dbReference>
<dbReference type="GO" id="GO:0090333">
    <property type="term" value="P:regulation of stomatal closure"/>
    <property type="evidence" value="ECO:0000315"/>
    <property type="project" value="UniProtKB"/>
</dbReference>
<dbReference type="GO" id="GO:0051510">
    <property type="term" value="P:regulation of unidimensional cell growth"/>
    <property type="evidence" value="ECO:0000315"/>
    <property type="project" value="UniProtKB"/>
</dbReference>
<dbReference type="CDD" id="cd06623">
    <property type="entry name" value="PKc_MAPKK_plant_like"/>
    <property type="match status" value="1"/>
</dbReference>
<dbReference type="FunFam" id="1.10.510.10:FF:000350">
    <property type="entry name" value="Mitogen-activated protein kinase 2"/>
    <property type="match status" value="1"/>
</dbReference>
<dbReference type="FunFam" id="3.30.200.20:FF:000388">
    <property type="entry name" value="Mitogen-activated protein kinase 2"/>
    <property type="match status" value="1"/>
</dbReference>
<dbReference type="Gene3D" id="3.30.200.20">
    <property type="entry name" value="Phosphorylase Kinase, domain 1"/>
    <property type="match status" value="1"/>
</dbReference>
<dbReference type="Gene3D" id="1.10.510.10">
    <property type="entry name" value="Transferase(Phosphotransferase) domain 1"/>
    <property type="match status" value="1"/>
</dbReference>
<dbReference type="InterPro" id="IPR011009">
    <property type="entry name" value="Kinase-like_dom_sf"/>
</dbReference>
<dbReference type="InterPro" id="IPR000719">
    <property type="entry name" value="Prot_kinase_dom"/>
</dbReference>
<dbReference type="InterPro" id="IPR017441">
    <property type="entry name" value="Protein_kinase_ATP_BS"/>
</dbReference>
<dbReference type="InterPro" id="IPR008271">
    <property type="entry name" value="Ser/Thr_kinase_AS"/>
</dbReference>
<dbReference type="InterPro" id="IPR053235">
    <property type="entry name" value="Ser_Thr_kinase"/>
</dbReference>
<dbReference type="PANTHER" id="PTHR24361">
    <property type="entry name" value="MITOGEN-ACTIVATED KINASE KINASE KINASE"/>
    <property type="match status" value="1"/>
</dbReference>
<dbReference type="PANTHER" id="PTHR24361:SF762">
    <property type="entry name" value="MITOGEN-ACTIVATED PROTEIN KINASE KINASE 5"/>
    <property type="match status" value="1"/>
</dbReference>
<dbReference type="Pfam" id="PF00069">
    <property type="entry name" value="Pkinase"/>
    <property type="match status" value="1"/>
</dbReference>
<dbReference type="SMART" id="SM00220">
    <property type="entry name" value="S_TKc"/>
    <property type="match status" value="1"/>
</dbReference>
<dbReference type="SUPFAM" id="SSF56112">
    <property type="entry name" value="Protein kinase-like (PK-like)"/>
    <property type="match status" value="1"/>
</dbReference>
<dbReference type="PROSITE" id="PS00107">
    <property type="entry name" value="PROTEIN_KINASE_ATP"/>
    <property type="match status" value="1"/>
</dbReference>
<dbReference type="PROSITE" id="PS50011">
    <property type="entry name" value="PROTEIN_KINASE_DOM"/>
    <property type="match status" value="1"/>
</dbReference>
<dbReference type="PROSITE" id="PS00108">
    <property type="entry name" value="PROTEIN_KINASE_ST"/>
    <property type="match status" value="1"/>
</dbReference>
<feature type="chain" id="PRO_0000245824" description="Mitogen-activated protein kinase kinase 5">
    <location>
        <begin position="1"/>
        <end position="348"/>
    </location>
</feature>
<feature type="domain" description="Protein kinase" evidence="3">
    <location>
        <begin position="70"/>
        <end position="325"/>
    </location>
</feature>
<feature type="region of interest" description="Disordered" evidence="5">
    <location>
        <begin position="1"/>
        <end position="26"/>
    </location>
</feature>
<feature type="region of interest" description="Disordered" evidence="5">
    <location>
        <begin position="35"/>
        <end position="54"/>
    </location>
</feature>
<feature type="active site" description="Proton acceptor" evidence="3 4">
    <location>
        <position position="187"/>
    </location>
</feature>
<feature type="binding site" evidence="3">
    <location>
        <begin position="76"/>
        <end position="84"/>
    </location>
    <ligand>
        <name>ATP</name>
        <dbReference type="ChEBI" id="CHEBI:30616"/>
    </ligand>
</feature>
<feature type="binding site" evidence="3">
    <location>
        <position position="99"/>
    </location>
    <ligand>
        <name>ATP</name>
        <dbReference type="ChEBI" id="CHEBI:30616"/>
    </ligand>
</feature>
<feature type="modified residue" description="Phosphoserine; by ASK7" evidence="1">
    <location>
        <position position="6"/>
    </location>
</feature>
<feature type="modified residue" description="Phosphothreonine" evidence="8">
    <location>
        <position position="215"/>
    </location>
</feature>
<feature type="modified residue" description="Phosphoserine" evidence="8">
    <location>
        <position position="221"/>
    </location>
</feature>
<feature type="modified residue" description="Phosphoserine; by ASK7" evidence="1">
    <location>
        <position position="221"/>
    </location>
</feature>
<feature type="modified residue" description="Phosphothreonine; by ASK7" evidence="2">
    <location>
        <position position="225"/>
    </location>
</feature>
<feature type="modified residue" description="ADP-ribosylarginine; by HopF2" evidence="13">
    <location>
        <position position="313"/>
    </location>
</feature>
<feature type="mutagenesis site" description="Loss of kinase activity." evidence="7 8 17">
    <original>K</original>
    <variation>M</variation>
    <location>
        <position position="99"/>
    </location>
</feature>
<feature type="mutagenesis site" description="Loss of kinase activity. Phosphorylated by MAPKKK5 and MAPKKK20." evidence="7 8 17 20 21">
    <original>K</original>
    <variation>R</variation>
    <location>
        <position position="99"/>
    </location>
</feature>
<feature type="mutagenesis site" description="Impaired phosphorylation by MAPKKK5; when associated with A-221." evidence="20">
    <original>T</original>
    <variation>A</variation>
    <location>
        <position position="215"/>
    </location>
</feature>
<feature type="mutagenesis site" description="Constitutively active; when associated with D-221." evidence="7 8">
    <original>T</original>
    <variation>D</variation>
    <location>
        <position position="215"/>
    </location>
</feature>
<feature type="mutagenesis site" description="Constitutively active; when associated with E-221." evidence="7 8">
    <original>T</original>
    <variation>E</variation>
    <location>
        <position position="215"/>
    </location>
</feature>
<feature type="mutagenesis site" description="Impaired phosphorylation by MAPKKK5; when associated with A-215." evidence="20">
    <original>S</original>
    <variation>A</variation>
    <location>
        <position position="221"/>
    </location>
</feature>
<feature type="mutagenesis site" description="Constitutively active; when associated with D-215." evidence="7 8">
    <original>S</original>
    <variation>D</variation>
    <location>
        <position position="221"/>
    </location>
</feature>
<feature type="mutagenesis site" description="Constitutively active; when associated with E-215." evidence="7 8">
    <original>S</original>
    <variation>E</variation>
    <location>
        <position position="221"/>
    </location>
</feature>
<feature type="mutagenesis site" description="Loss of ADP-ribosylation." evidence="13">
    <original>R</original>
    <variation>A</variation>
    <variation>K</variation>
    <location>
        <position position="313"/>
    </location>
</feature>
<feature type="sequence conflict" description="In Ref. 1; BAA28831." evidence="26" ref="1">
    <original>N</original>
    <variation>D</variation>
    <location>
        <position position="192"/>
    </location>
</feature>
<feature type="strand" evidence="29">
    <location>
        <begin position="69"/>
        <end position="76"/>
    </location>
</feature>
<feature type="strand" evidence="29">
    <location>
        <begin position="84"/>
        <end position="89"/>
    </location>
</feature>
<feature type="turn" evidence="29">
    <location>
        <begin position="90"/>
        <end position="93"/>
    </location>
</feature>
<feature type="strand" evidence="29">
    <location>
        <begin position="94"/>
        <end position="102"/>
    </location>
</feature>
<feature type="helix" evidence="29">
    <location>
        <begin position="107"/>
        <end position="122"/>
    </location>
</feature>
<feature type="strand" evidence="29">
    <location>
        <begin position="131"/>
        <end position="135"/>
    </location>
</feature>
<feature type="helix" evidence="29">
    <location>
        <begin position="137"/>
        <end position="139"/>
    </location>
</feature>
<feature type="strand" evidence="29">
    <location>
        <begin position="140"/>
        <end position="145"/>
    </location>
</feature>
<feature type="helix" evidence="29">
    <location>
        <begin position="161"/>
        <end position="180"/>
    </location>
</feature>
<feature type="helix" evidence="29">
    <location>
        <begin position="190"/>
        <end position="192"/>
    </location>
</feature>
<feature type="strand" evidence="29">
    <location>
        <begin position="193"/>
        <end position="195"/>
    </location>
</feature>
<feature type="strand" evidence="29">
    <location>
        <begin position="201"/>
        <end position="203"/>
    </location>
</feature>
<feature type="strand" evidence="29">
    <location>
        <begin position="213"/>
        <end position="216"/>
    </location>
</feature>
<feature type="helix" evidence="29">
    <location>
        <begin position="226"/>
        <end position="228"/>
    </location>
</feature>
<feature type="helix" evidence="29">
    <location>
        <begin position="231"/>
        <end position="234"/>
    </location>
</feature>
<feature type="turn" evidence="29">
    <location>
        <begin position="237"/>
        <end position="241"/>
    </location>
</feature>
<feature type="helix" evidence="29">
    <location>
        <begin position="245"/>
        <end position="262"/>
    </location>
</feature>
<feature type="strand" evidence="29">
    <location>
        <begin position="266"/>
        <end position="269"/>
    </location>
</feature>
<feature type="strand" evidence="29">
    <location>
        <begin position="271"/>
        <end position="273"/>
    </location>
</feature>
<feature type="helix" evidence="29">
    <location>
        <begin position="275"/>
        <end position="282"/>
    </location>
</feature>
<feature type="helix" evidence="29">
    <location>
        <begin position="296"/>
        <end position="303"/>
    </location>
</feature>
<feature type="helix" evidence="29">
    <location>
        <begin position="310"/>
        <end position="312"/>
    </location>
</feature>
<feature type="helix" evidence="29">
    <location>
        <begin position="316"/>
        <end position="319"/>
    </location>
</feature>
<feature type="turn" evidence="29">
    <location>
        <begin position="323"/>
        <end position="325"/>
    </location>
</feature>
<reference key="1">
    <citation type="journal article" date="1998" name="DNA Res.">
        <title>Molecular cloning and characterization of three cDNAs encoding putative mitogen-activated protein kinase kinases (MAPKKs) in Arabidopsis thaliana.</title>
        <authorList>
            <person name="Ichimura K."/>
            <person name="Mizoguchi T."/>
            <person name="Hayashida N."/>
            <person name="Seki M."/>
            <person name="Shinozaki K."/>
        </authorList>
    </citation>
    <scope>NUCLEOTIDE SEQUENCE [MRNA]</scope>
    <scope>TISSUE SPECIFICITY</scope>
    <source>
        <strain>cv. Columbia</strain>
    </source>
</reference>
<reference key="2">
    <citation type="journal article" date="1999" name="Plant Sci.">
        <title>Molecular characterization and expression of an Arabidopsis thaliana L. MAP kinase kinase cDNA AtMAP2Kalpha.</title>
        <authorList>
            <person name="Hamal A."/>
            <person name="Jouannic S."/>
            <person name="Leprince A.-S."/>
            <person name="Kreis M."/>
            <person name="Henry Y."/>
        </authorList>
    </citation>
    <scope>NUCLEOTIDE SEQUENCE [MRNA]</scope>
    <scope>TISSUE SPECIFICITY</scope>
    <source>
        <strain>cv. Columbia</strain>
        <tissue>Root</tissue>
    </source>
</reference>
<reference key="3">
    <citation type="journal article" date="2000" name="DNA Res.">
        <title>Structural analysis of Arabidopsis thaliana chromosome 3. I. Sequence features of the regions of 4,504,864 bp covered by sixty P1 and TAC clones.</title>
        <authorList>
            <person name="Sato S."/>
            <person name="Nakamura Y."/>
            <person name="Kaneko T."/>
            <person name="Katoh T."/>
            <person name="Asamizu E."/>
            <person name="Tabata S."/>
        </authorList>
    </citation>
    <scope>NUCLEOTIDE SEQUENCE [LARGE SCALE GENOMIC DNA]</scope>
    <source>
        <strain>cv. Columbia</strain>
    </source>
</reference>
<reference key="4">
    <citation type="journal article" date="2017" name="Plant J.">
        <title>Araport11: a complete reannotation of the Arabidopsis thaliana reference genome.</title>
        <authorList>
            <person name="Cheng C.Y."/>
            <person name="Krishnakumar V."/>
            <person name="Chan A.P."/>
            <person name="Thibaud-Nissen F."/>
            <person name="Schobel S."/>
            <person name="Town C.D."/>
        </authorList>
    </citation>
    <scope>GENOME REANNOTATION</scope>
    <source>
        <strain>cv. Columbia</strain>
    </source>
</reference>
<reference key="5">
    <citation type="journal article" date="2003" name="Science">
        <title>Empirical analysis of transcriptional activity in the Arabidopsis genome.</title>
        <authorList>
            <person name="Yamada K."/>
            <person name="Lim J."/>
            <person name="Dale J.M."/>
            <person name="Chen H."/>
            <person name="Shinn P."/>
            <person name="Palm C.J."/>
            <person name="Southwick A.M."/>
            <person name="Wu H.C."/>
            <person name="Kim C.J."/>
            <person name="Nguyen M."/>
            <person name="Pham P.K."/>
            <person name="Cheuk R.F."/>
            <person name="Karlin-Newmann G."/>
            <person name="Liu S.X."/>
            <person name="Lam B."/>
            <person name="Sakano H."/>
            <person name="Wu T."/>
            <person name="Yu G."/>
            <person name="Miranda M."/>
            <person name="Quach H.L."/>
            <person name="Tripp M."/>
            <person name="Chang C.H."/>
            <person name="Lee J.M."/>
            <person name="Toriumi M.J."/>
            <person name="Chan M.M."/>
            <person name="Tang C.C."/>
            <person name="Onodera C.S."/>
            <person name="Deng J.M."/>
            <person name="Akiyama K."/>
            <person name="Ansari Y."/>
            <person name="Arakawa T."/>
            <person name="Banh J."/>
            <person name="Banno F."/>
            <person name="Bowser L."/>
            <person name="Brooks S.Y."/>
            <person name="Carninci P."/>
            <person name="Chao Q."/>
            <person name="Choy N."/>
            <person name="Enju A."/>
            <person name="Goldsmith A.D."/>
            <person name="Gurjal M."/>
            <person name="Hansen N.F."/>
            <person name="Hayashizaki Y."/>
            <person name="Johnson-Hopson C."/>
            <person name="Hsuan V.W."/>
            <person name="Iida K."/>
            <person name="Karnes M."/>
            <person name="Khan S."/>
            <person name="Koesema E."/>
            <person name="Ishida J."/>
            <person name="Jiang P.X."/>
            <person name="Jones T."/>
            <person name="Kawai J."/>
            <person name="Kamiya A."/>
            <person name="Meyers C."/>
            <person name="Nakajima M."/>
            <person name="Narusaka M."/>
            <person name="Seki M."/>
            <person name="Sakurai T."/>
            <person name="Satou M."/>
            <person name="Tamse R."/>
            <person name="Vaysberg M."/>
            <person name="Wallender E.K."/>
            <person name="Wong C."/>
            <person name="Yamamura Y."/>
            <person name="Yuan S."/>
            <person name="Shinozaki K."/>
            <person name="Davis R.W."/>
            <person name="Theologis A."/>
            <person name="Ecker J.R."/>
        </authorList>
    </citation>
    <scope>NUCLEOTIDE SEQUENCE [LARGE SCALE MRNA]</scope>
    <source>
        <strain>cv. Columbia</strain>
    </source>
</reference>
<reference key="6">
    <citation type="journal article" date="2002" name="J. Biol. Chem.">
        <title>Cell death mediated by MAPK is associated with hydrogen peroxide production in Arabidopsis.</title>
        <authorList>
            <person name="Ren D."/>
            <person name="Yang H."/>
            <person name="Zhang S."/>
        </authorList>
    </citation>
    <scope>FUNCTION</scope>
    <scope>MUTAGENESIS OF LYS-99; THR-215 AND SER-221</scope>
</reference>
<reference key="7">
    <citation type="journal article" date="2002" name="Nature">
        <title>MAP kinase signalling cascade in Arabidopsis innate immunity.</title>
        <authorList>
            <person name="Asai T."/>
            <person name="Tena G."/>
            <person name="Plotnikova J."/>
            <person name="Willmann M.R."/>
            <person name="Chiu W.-L."/>
            <person name="Gomez-Gomez L."/>
            <person name="Boller T."/>
            <person name="Ausubel F.M."/>
            <person name="Sheen J."/>
        </authorList>
    </citation>
    <scope>FUNCTION</scope>
    <scope>ACTIVITY REGULATION</scope>
    <scope>CATALYTIC ACTIVITY</scope>
    <scope>PHOSPHORYLATION AT THR-215 AND SER-221</scope>
    <scope>MUTAGENESIS OF LYS-99; THR-215 AND SER-221</scope>
</reference>
<reference key="8">
    <citation type="journal article" date="2002" name="Trends Plant Sci.">
        <title>Mitogen-activated protein kinase cascades in plants: a new nomenclature.</title>
        <authorList>
            <consortium name="MAPK group"/>
        </authorList>
    </citation>
    <scope>GENE FAMILY</scope>
    <scope>NOMENCLATURE</scope>
</reference>
<reference key="9">
    <citation type="journal article" date="2006" name="Trends Plant Sci.">
        <title>Ancient signals: comparative genomics of plant MAPK and MAPKK gene families.</title>
        <authorList>
            <person name="Hamel L.P."/>
            <person name="Nicole M.C."/>
            <person name="Sritubtim S."/>
            <person name="Morency M.J."/>
            <person name="Ellis M."/>
            <person name="Ehlting J."/>
            <person name="Beaudoin N."/>
            <person name="Barbazuk B."/>
            <person name="Klessig D."/>
            <person name="Lee J."/>
            <person name="Martin G."/>
            <person name="Mundy J."/>
            <person name="Ohashi Y."/>
            <person name="Scheel D."/>
            <person name="Sheen J."/>
            <person name="Xing T."/>
            <person name="Zhang S."/>
            <person name="Seguin A."/>
            <person name="Ellis B.E."/>
        </authorList>
    </citation>
    <scope>GENE FAMILY</scope>
</reference>
<reference key="10">
    <citation type="journal article" date="2007" name="Plant Cell">
        <title>Stomatal development and patterning are regulated by environmentally responsive mitogen-activated protein kinases in Arabidopsis.</title>
        <authorList>
            <person name="Wang H."/>
            <person name="Ngwenyama N."/>
            <person name="Liu Y."/>
            <person name="Walker J.C."/>
            <person name="Zhang S."/>
        </authorList>
    </citation>
    <scope>FUNCTION</scope>
</reference>
<reference key="11">
    <citation type="journal article" date="2008" name="Cell Res.">
        <title>Ethylene signaling is required for the acceleration of cell death induced by the activation of AtMEK5 in Arabidopsis.</title>
        <authorList>
            <person name="Liu H."/>
            <person name="Wang Y."/>
            <person name="Xu J."/>
            <person name="Su T."/>
            <person name="Liu G."/>
            <person name="Ren D."/>
        </authorList>
    </citation>
    <scope>FUNCTION</scope>
</reference>
<reference key="12">
    <citation type="journal article" date="2008" name="Plant Signal. Behav.">
        <title>Comprehensive analysis of protein-protein interactions between Arabidopsis MAPKs and MAPK kinases helps define potential MAPK signalling modules.</title>
        <authorList>
            <person name="Lee J.S."/>
            <person name="Huh K.W."/>
            <person name="Bhargava A."/>
            <person name="Ellis B.E."/>
        </authorList>
    </citation>
    <scope>INTERACTION WITH MPK6</scope>
</reference>
<reference key="13">
    <citation type="journal article" date="2008" name="Proc. Natl. Acad. Sci. U.S.A.">
        <title>Regulation of floral organ abscission in Arabidopsis thaliana.</title>
        <authorList>
            <person name="Cho S.K."/>
            <person name="Larue C.T."/>
            <person name="Chevalier D."/>
            <person name="Wang H."/>
            <person name="Jinn T.-L."/>
            <person name="Zhang S."/>
            <person name="Walker J.C."/>
        </authorList>
    </citation>
    <scope>DISRUPTION PHENOTYPE</scope>
    <scope>FUNCTION</scope>
</reference>
<reference key="14">
    <citation type="journal article" date="2010" name="Plant Cell">
        <title>A Pseudomonas syringae ADP-ribosyltransferase inhibits Arabidopsis mitogen-activated protein kinase kinases.</title>
        <authorList>
            <person name="Wang Y."/>
            <person name="Li J."/>
            <person name="Hou S."/>
            <person name="Wang X."/>
            <person name="Li Y."/>
            <person name="Ren D."/>
            <person name="Chen S."/>
            <person name="Tang X."/>
            <person name="Zhou J.M."/>
        </authorList>
    </citation>
    <scope>INTERACTION WITH P.SYRINGAE HOPF2</scope>
    <scope>ADP-RIBOSYLATION AT ARG-313</scope>
    <scope>MUTAGENESIS OF ARG-313</scope>
    <scope>ACTIVITY REGULATION</scope>
    <scope>FUNCTION</scope>
</reference>
<reference key="15">
    <citation type="journal article" date="2012" name="Plant Cell">
        <title>A MAPK cascade downstream of ERECTA receptor-like protein kinase regulates Arabidopsis inflorescence architecture by promoting localized cell proliferation.</title>
        <authorList>
            <person name="Meng X."/>
            <person name="Wang H."/>
            <person name="He Y."/>
            <person name="Liu Y."/>
            <person name="Walker J.C."/>
            <person name="Torii K.U."/>
            <person name="Zhang S."/>
        </authorList>
    </citation>
    <scope>FUNCTION</scope>
</reference>
<reference key="16">
    <citation type="journal article" date="2013" name="J. Biol. Chem.">
        <title>Brassinosteroid-regulated GSK3/Shaggy-like kinases phosphorylate mitogen-activated protein (MAP) kinase kinases, which control stomata development in Arabidopsis thaliana.</title>
        <authorList>
            <person name="Khan M."/>
            <person name="Rozhon W."/>
            <person name="Bigeard J."/>
            <person name="Pflieger D."/>
            <person name="Husar S."/>
            <person name="Pitzschke A."/>
            <person name="Teige M."/>
            <person name="Jonak C."/>
            <person name="Hirt H."/>
            <person name="Poppenberger B."/>
        </authorList>
    </citation>
    <scope>FUNCTION</scope>
    <scope>ACTIVITY REGULATION</scope>
</reference>
<reference key="17">
    <citation type="journal article" date="2013" name="Mol. Cell. Proteomics">
        <title>Identification of BZR1-interacting proteins as potential components of the brassinosteroid signaling pathway in Arabidopsis through tandem affinity purification.</title>
        <authorList>
            <person name="Wang C."/>
            <person name="Shang J.X."/>
            <person name="Chen Q.X."/>
            <person name="Oses-Prieto J.A."/>
            <person name="Bai M.Y."/>
            <person name="Yang Y."/>
            <person name="Yuan M."/>
            <person name="Zhang Y.L."/>
            <person name="Mu C.C."/>
            <person name="Deng Z."/>
            <person name="Wei C.Q."/>
            <person name="Burlingame A.L."/>
            <person name="Wang Z.Y."/>
            <person name="Sun Y."/>
        </authorList>
    </citation>
    <scope>FUNCTION</scope>
    <scope>INTERACTION WITH BZR1</scope>
    <scope>MUTAGENESIS OF LYS-99</scope>
</reference>
<reference key="18">
    <citation type="journal article" date="2013" name="Plant Cell Physiol.">
        <title>MKK5 regulates high light-induced gene expression of Cu/Zn superoxide dismutase 1 and 2 in Arabidopsis.</title>
        <authorList>
            <person name="Xing Y."/>
            <person name="Cao Q."/>
            <person name="Zhang Q."/>
            <person name="Qin L."/>
            <person name="Jia W."/>
            <person name="Zhang J."/>
        </authorList>
    </citation>
    <scope>FUNCTION</scope>
    <scope>ACTIVITY REGULATION</scope>
    <scope>DISRUPTION PHENOTYPE</scope>
</reference>
<reference key="19">
    <citation type="journal article" date="2015" name="Dev. Cell">
        <title>The BASL polarity protein controls a MAPK signaling feedback loop in asymmetric cell division.</title>
        <authorList>
            <person name="Zhang Y."/>
            <person name="Wang P."/>
            <person name="Shao W."/>
            <person name="Zhu J.-K."/>
            <person name="Dong J."/>
        </authorList>
    </citation>
    <scope>INTERACTION WITH BASL</scope>
    <source>
        <strain>cv. Columbia</strain>
    </source>
</reference>
<reference key="20">
    <citation type="journal article" date="2015" name="Nature">
        <title>Pathogen-secreted proteases activate a novel plant immune pathway.</title>
        <authorList>
            <person name="Cheng Z."/>
            <person name="Li J.F."/>
            <person name="Niu Y."/>
            <person name="Zhang X.C."/>
            <person name="Woody O.Z."/>
            <person name="Xiong Y."/>
            <person name="Djonovic S."/>
            <person name="Millet Y."/>
            <person name="Bush J."/>
            <person name="McConkey B.J."/>
            <person name="Sheen J."/>
            <person name="Ausubel F.M."/>
        </authorList>
    </citation>
    <scope>INTERACTION WITH RACK1A; RACK1B AND RACK1C</scope>
</reference>
<reference key="21">
    <citation type="journal article" date="2016" name="EMBO J.">
        <title>The Arabidopsis CERK1-associated kinase PBL27 connects chitin perception to MAPK activation.</title>
        <authorList>
            <person name="Yamada K."/>
            <person name="Yamaguchi K."/>
            <person name="Shirakawa T."/>
            <person name="Nakagami H."/>
            <person name="Mine A."/>
            <person name="Ishikawa K."/>
            <person name="Fujiwara M."/>
            <person name="Narusaka M."/>
            <person name="Narusaka Y."/>
            <person name="Ichimura K."/>
            <person name="Kobayashi Y."/>
            <person name="Matsui H."/>
            <person name="Nomura Y."/>
            <person name="Nomoto M."/>
            <person name="Tada Y."/>
            <person name="Fukao Y."/>
            <person name="Fukamizo T."/>
            <person name="Tsuda K."/>
            <person name="Shirasu K."/>
            <person name="Shibuya N."/>
            <person name="Kawasaki T."/>
        </authorList>
    </citation>
    <scope>INTERACTION WITH MAPKKK5</scope>
    <scope>PHOSPHORYLATION BY MAPKKK5</scope>
    <scope>MUTAGENESIS OF LYS-99; THR-215 AND SER-221</scope>
    <source>
        <strain>cv. Columbia</strain>
    </source>
</reference>
<reference key="22">
    <citation type="journal article" date="2017" name="Plant Physiol.">
        <title>AIK1, a mitogen-activated protein kinase, modulates abscisic acid responses through the MKK5-MPK6 kinase cascade.</title>
        <authorList>
            <person name="Li K."/>
            <person name="Yang F."/>
            <person name="Zhang G."/>
            <person name="Song S."/>
            <person name="Li Y."/>
            <person name="Ren D."/>
            <person name="Miao Y."/>
            <person name="Song C.-P."/>
        </authorList>
    </citation>
    <scope>FUNCTION</scope>
    <scope>MUTAGENESIS OF LYS-99</scope>
    <scope>DISRUPTION PHENOTYPE</scope>
    <scope>INTERACTION WITH MAPKKK20; MPK6 AND MPK3</scope>
    <scope>PHOSPHORYLATION</scope>
    <scope>ACTIVITY REGULATION</scope>
    <source>
        <strain>cv. Columbia</strain>
    </source>
</reference>
<reference key="23">
    <citation type="journal article" date="2018" name="Front. Plant Sci.">
        <title>Mitogen-activated protein kinase cascades in plant hormone signaling.</title>
        <authorList>
            <person name="Jagodzik P."/>
            <person name="Tajdel-Zielinska M."/>
            <person name="Ciesla A."/>
            <person name="Marczak M."/>
            <person name="Ludwikow A."/>
        </authorList>
    </citation>
    <scope>REVIEW ON MITOGEN-ACTIVATED PROTEIN KINASE CASCADES</scope>
</reference>
<organism>
    <name type="scientific">Arabidopsis thaliana</name>
    <name type="common">Mouse-ear cress</name>
    <dbReference type="NCBI Taxonomy" id="3702"/>
    <lineage>
        <taxon>Eukaryota</taxon>
        <taxon>Viridiplantae</taxon>
        <taxon>Streptophyta</taxon>
        <taxon>Embryophyta</taxon>
        <taxon>Tracheophyta</taxon>
        <taxon>Spermatophyta</taxon>
        <taxon>Magnoliopsida</taxon>
        <taxon>eudicotyledons</taxon>
        <taxon>Gunneridae</taxon>
        <taxon>Pentapetalae</taxon>
        <taxon>rosids</taxon>
        <taxon>malvids</taxon>
        <taxon>Brassicales</taxon>
        <taxon>Brassicaceae</taxon>
        <taxon>Camelineae</taxon>
        <taxon>Arabidopsis</taxon>
    </lineage>
</organism>
<protein>
    <recommendedName>
        <fullName evidence="23">Mitogen-activated protein kinase kinase 5</fullName>
        <shortName evidence="25">AtMAP2Kalpha</shortName>
        <shortName evidence="24">AtMEK5</shortName>
        <shortName evidence="23">AtMKK5</shortName>
        <shortName evidence="23">MAP kinase kinase 5</shortName>
        <ecNumber evidence="8">2.7.12.2</ecNumber>
    </recommendedName>
</protein>
<proteinExistence type="evidence at protein level"/>
<name>M2K5_ARATH</name>
<accession>Q8RXG3</accession>
<accession>O80398</accession>
<accession>Q96517</accession>